<protein>
    <recommendedName>
        <fullName evidence="1">Segregation and condensation protein B</fullName>
    </recommendedName>
</protein>
<proteinExistence type="inferred from homology"/>
<evidence type="ECO:0000255" key="1">
    <source>
        <dbReference type="HAMAP-Rule" id="MF_01804"/>
    </source>
</evidence>
<dbReference type="EMBL" id="BX571857">
    <property type="protein sequence ID" value="CAG43211.1"/>
    <property type="molecule type" value="Genomic_DNA"/>
</dbReference>
<dbReference type="RefSeq" id="WP_000368657.1">
    <property type="nucleotide sequence ID" value="NC_002953.3"/>
</dbReference>
<dbReference type="SMR" id="Q6G970"/>
<dbReference type="KEGG" id="sas:SAS1434"/>
<dbReference type="HOGENOM" id="CLU_045647_5_3_9"/>
<dbReference type="GO" id="GO:0005737">
    <property type="term" value="C:cytoplasm"/>
    <property type="evidence" value="ECO:0007669"/>
    <property type="project" value="UniProtKB-SubCell"/>
</dbReference>
<dbReference type="GO" id="GO:0051301">
    <property type="term" value="P:cell division"/>
    <property type="evidence" value="ECO:0007669"/>
    <property type="project" value="UniProtKB-KW"/>
</dbReference>
<dbReference type="GO" id="GO:0051304">
    <property type="term" value="P:chromosome separation"/>
    <property type="evidence" value="ECO:0007669"/>
    <property type="project" value="InterPro"/>
</dbReference>
<dbReference type="GO" id="GO:0006260">
    <property type="term" value="P:DNA replication"/>
    <property type="evidence" value="ECO:0007669"/>
    <property type="project" value="UniProtKB-UniRule"/>
</dbReference>
<dbReference type="Gene3D" id="1.10.10.10">
    <property type="entry name" value="Winged helix-like DNA-binding domain superfamily/Winged helix DNA-binding domain"/>
    <property type="match status" value="2"/>
</dbReference>
<dbReference type="HAMAP" id="MF_01804">
    <property type="entry name" value="ScpB"/>
    <property type="match status" value="1"/>
</dbReference>
<dbReference type="InterPro" id="IPR005234">
    <property type="entry name" value="ScpB_csome_segregation"/>
</dbReference>
<dbReference type="InterPro" id="IPR036388">
    <property type="entry name" value="WH-like_DNA-bd_sf"/>
</dbReference>
<dbReference type="InterPro" id="IPR036390">
    <property type="entry name" value="WH_DNA-bd_sf"/>
</dbReference>
<dbReference type="NCBIfam" id="TIGR00281">
    <property type="entry name" value="SMC-Scp complex subunit ScpB"/>
    <property type="match status" value="1"/>
</dbReference>
<dbReference type="PANTHER" id="PTHR34298">
    <property type="entry name" value="SEGREGATION AND CONDENSATION PROTEIN B"/>
    <property type="match status" value="1"/>
</dbReference>
<dbReference type="PANTHER" id="PTHR34298:SF2">
    <property type="entry name" value="SEGREGATION AND CONDENSATION PROTEIN B"/>
    <property type="match status" value="1"/>
</dbReference>
<dbReference type="Pfam" id="PF04079">
    <property type="entry name" value="SMC_ScpB"/>
    <property type="match status" value="1"/>
</dbReference>
<dbReference type="PIRSF" id="PIRSF019345">
    <property type="entry name" value="ScpB"/>
    <property type="match status" value="1"/>
</dbReference>
<dbReference type="SUPFAM" id="SSF46785">
    <property type="entry name" value="Winged helix' DNA-binding domain"/>
    <property type="match status" value="2"/>
</dbReference>
<name>SCPB_STAAS</name>
<comment type="function">
    <text evidence="1">Participates in chromosomal partition during cell division. May act via the formation of a condensin-like complex containing Smc and ScpA that pull DNA away from mid-cell into both cell halves.</text>
</comment>
<comment type="subunit">
    <text evidence="1">Homodimer. Homodimerization may be required to stabilize the binding of ScpA to the Smc head domains. Component of a cohesin-like complex composed of ScpA, ScpB and the Smc homodimer, in which ScpA and ScpB bind to the head domain of Smc. The presence of the three proteins is required for the association of the complex with DNA.</text>
</comment>
<comment type="subcellular location">
    <subcellularLocation>
        <location evidence="1">Cytoplasm</location>
    </subcellularLocation>
    <text evidence="1">Associated with two foci at the outer edges of the nucleoid region in young cells, and at four foci within both cell halves in older cells.</text>
</comment>
<comment type="similarity">
    <text evidence="1">Belongs to the ScpB family.</text>
</comment>
<reference key="1">
    <citation type="journal article" date="2004" name="Proc. Natl. Acad. Sci. U.S.A.">
        <title>Complete genomes of two clinical Staphylococcus aureus strains: evidence for the rapid evolution of virulence and drug resistance.</title>
        <authorList>
            <person name="Holden M.T.G."/>
            <person name="Feil E.J."/>
            <person name="Lindsay J.A."/>
            <person name="Peacock S.J."/>
            <person name="Day N.P.J."/>
            <person name="Enright M.C."/>
            <person name="Foster T.J."/>
            <person name="Moore C.E."/>
            <person name="Hurst L."/>
            <person name="Atkin R."/>
            <person name="Barron A."/>
            <person name="Bason N."/>
            <person name="Bentley S.D."/>
            <person name="Chillingworth C."/>
            <person name="Chillingworth T."/>
            <person name="Churcher C."/>
            <person name="Clark L."/>
            <person name="Corton C."/>
            <person name="Cronin A."/>
            <person name="Doggett J."/>
            <person name="Dowd L."/>
            <person name="Feltwell T."/>
            <person name="Hance Z."/>
            <person name="Harris B."/>
            <person name="Hauser H."/>
            <person name="Holroyd S."/>
            <person name="Jagels K."/>
            <person name="James K.D."/>
            <person name="Lennard N."/>
            <person name="Line A."/>
            <person name="Mayes R."/>
            <person name="Moule S."/>
            <person name="Mungall K."/>
            <person name="Ormond D."/>
            <person name="Quail M.A."/>
            <person name="Rabbinowitsch E."/>
            <person name="Rutherford K.M."/>
            <person name="Sanders M."/>
            <person name="Sharp S."/>
            <person name="Simmonds M."/>
            <person name="Stevens K."/>
            <person name="Whitehead S."/>
            <person name="Barrell B.G."/>
            <person name="Spratt B.G."/>
            <person name="Parkhill J."/>
        </authorList>
    </citation>
    <scope>NUCLEOTIDE SEQUENCE [LARGE SCALE GENOMIC DNA]</scope>
    <source>
        <strain>MSSA476</strain>
    </source>
</reference>
<organism>
    <name type="scientific">Staphylococcus aureus (strain MSSA476)</name>
    <dbReference type="NCBI Taxonomy" id="282459"/>
    <lineage>
        <taxon>Bacteria</taxon>
        <taxon>Bacillati</taxon>
        <taxon>Bacillota</taxon>
        <taxon>Bacilli</taxon>
        <taxon>Bacillales</taxon>
        <taxon>Staphylococcaceae</taxon>
        <taxon>Staphylococcus</taxon>
    </lineage>
</organism>
<keyword id="KW-0131">Cell cycle</keyword>
<keyword id="KW-0132">Cell division</keyword>
<keyword id="KW-0159">Chromosome partition</keyword>
<keyword id="KW-0963">Cytoplasm</keyword>
<gene>
    <name evidence="1" type="primary">scpB</name>
    <name type="ordered locus">SAS1434</name>
</gene>
<accession>Q6G970</accession>
<feature type="chain" id="PRO_0000211149" description="Segregation and condensation protein B">
    <location>
        <begin position="1"/>
        <end position="180"/>
    </location>
</feature>
<sequence>MDNHGILESLLFTAGDEGLDEKQLLEILDMSKNQLVELIENYSSHGLMIQRFGTTYVLTTKKEAATYIEQLIEQKSQMKLSQAAMEVLSIIAYNQPLSRSDIELIRSINSDGAVKTLIAKGLVEAKVVNEQRSQQLITTDLFLNVFGISNIEDLPTTEEDDEEMDAFFSNLVNQKGENND</sequence>